<evidence type="ECO:0000255" key="1">
    <source>
        <dbReference type="HAMAP-Rule" id="MF_00456"/>
    </source>
</evidence>
<evidence type="ECO:0000305" key="2"/>
<name>PROB_STRPD</name>
<sequence length="273" mass="29702">MMKRQFEDVTRIVIKIGTSSLVLPTGKINLEKIDQLAFVISSLMNKGKEVILVSSGAMGFGLDILKMEKRPTNLAKQQAVSSVGQVAMMSLYSQIFAHYQTNVSQILLTRDIVVFPESLANVTNAFESLISLGIVPIVNENDAVSVDEMDHATKFGDNDRLSAVVAGITKADLLIMLSDIDGLFDKSPTIYEDAQLRSHVAVITQEIIASAGGAGSKFGTGGMLSKVQSAQMVFENKGQMVLMNGANPRDILRVLEGQPLGTWFKQIEEVRHD</sequence>
<organism>
    <name type="scientific">Streptococcus pyogenes serotype M2 (strain MGAS10270)</name>
    <dbReference type="NCBI Taxonomy" id="370552"/>
    <lineage>
        <taxon>Bacteria</taxon>
        <taxon>Bacillati</taxon>
        <taxon>Bacillota</taxon>
        <taxon>Bacilli</taxon>
        <taxon>Lactobacillales</taxon>
        <taxon>Streptococcaceae</taxon>
        <taxon>Streptococcus</taxon>
    </lineage>
</organism>
<protein>
    <recommendedName>
        <fullName evidence="1">Glutamate 5-kinase</fullName>
        <ecNumber evidence="1">2.7.2.11</ecNumber>
    </recommendedName>
    <alternativeName>
        <fullName evidence="1">Gamma-glutamyl kinase</fullName>
        <shortName evidence="1">GK</shortName>
    </alternativeName>
</protein>
<feature type="chain" id="PRO_0000253006" description="Glutamate 5-kinase">
    <location>
        <begin position="1"/>
        <end position="273"/>
    </location>
</feature>
<feature type="binding site" evidence="1">
    <location>
        <position position="15"/>
    </location>
    <ligand>
        <name>ATP</name>
        <dbReference type="ChEBI" id="CHEBI:30616"/>
    </ligand>
</feature>
<feature type="binding site" evidence="1">
    <location>
        <position position="55"/>
    </location>
    <ligand>
        <name>substrate</name>
    </ligand>
</feature>
<feature type="binding site" evidence="1">
    <location>
        <position position="142"/>
    </location>
    <ligand>
        <name>substrate</name>
    </ligand>
</feature>
<feature type="binding site" evidence="1">
    <location>
        <position position="158"/>
    </location>
    <ligand>
        <name>substrate</name>
    </ligand>
</feature>
<feature type="binding site" evidence="1">
    <location>
        <begin position="178"/>
        <end position="179"/>
    </location>
    <ligand>
        <name>ATP</name>
        <dbReference type="ChEBI" id="CHEBI:30616"/>
    </ligand>
</feature>
<feature type="binding site" evidence="1">
    <location>
        <begin position="220"/>
        <end position="226"/>
    </location>
    <ligand>
        <name>ATP</name>
        <dbReference type="ChEBI" id="CHEBI:30616"/>
    </ligand>
</feature>
<accession>Q1JFK5</accession>
<dbReference type="EC" id="2.7.2.11" evidence="1"/>
<dbReference type="EMBL" id="CP000260">
    <property type="protein sequence ID" value="ABF34554.1"/>
    <property type="status" value="ALT_INIT"/>
    <property type="molecule type" value="Genomic_DNA"/>
</dbReference>
<dbReference type="SMR" id="Q1JFK5"/>
<dbReference type="KEGG" id="sph:MGAS10270_Spy1489"/>
<dbReference type="HOGENOM" id="CLU_025400_0_2_9"/>
<dbReference type="UniPathway" id="UPA00098">
    <property type="reaction ID" value="UER00359"/>
</dbReference>
<dbReference type="Proteomes" id="UP000002436">
    <property type="component" value="Chromosome"/>
</dbReference>
<dbReference type="GO" id="GO:0005829">
    <property type="term" value="C:cytosol"/>
    <property type="evidence" value="ECO:0007669"/>
    <property type="project" value="TreeGrafter"/>
</dbReference>
<dbReference type="GO" id="GO:0005524">
    <property type="term" value="F:ATP binding"/>
    <property type="evidence" value="ECO:0007669"/>
    <property type="project" value="UniProtKB-KW"/>
</dbReference>
<dbReference type="GO" id="GO:0004349">
    <property type="term" value="F:glutamate 5-kinase activity"/>
    <property type="evidence" value="ECO:0007669"/>
    <property type="project" value="UniProtKB-UniRule"/>
</dbReference>
<dbReference type="GO" id="GO:0055129">
    <property type="term" value="P:L-proline biosynthetic process"/>
    <property type="evidence" value="ECO:0007669"/>
    <property type="project" value="UniProtKB-UniRule"/>
</dbReference>
<dbReference type="CDD" id="cd04242">
    <property type="entry name" value="AAK_G5K_ProB"/>
    <property type="match status" value="1"/>
</dbReference>
<dbReference type="FunFam" id="3.40.1160.10:FF:000006">
    <property type="entry name" value="Glutamate 5-kinase"/>
    <property type="match status" value="1"/>
</dbReference>
<dbReference type="Gene3D" id="3.40.1160.10">
    <property type="entry name" value="Acetylglutamate kinase-like"/>
    <property type="match status" value="1"/>
</dbReference>
<dbReference type="HAMAP" id="MF_00456">
    <property type="entry name" value="ProB"/>
    <property type="match status" value="1"/>
</dbReference>
<dbReference type="InterPro" id="IPR036393">
    <property type="entry name" value="AceGlu_kinase-like_sf"/>
</dbReference>
<dbReference type="InterPro" id="IPR001048">
    <property type="entry name" value="Asp/Glu/Uridylate_kinase"/>
</dbReference>
<dbReference type="InterPro" id="IPR041739">
    <property type="entry name" value="G5K_ProB"/>
</dbReference>
<dbReference type="InterPro" id="IPR001057">
    <property type="entry name" value="Glu/AcGlu_kinase"/>
</dbReference>
<dbReference type="InterPro" id="IPR011529">
    <property type="entry name" value="Glu_5kinase"/>
</dbReference>
<dbReference type="InterPro" id="IPR005715">
    <property type="entry name" value="Glu_5kinase/COase_Synthase"/>
</dbReference>
<dbReference type="InterPro" id="IPR019797">
    <property type="entry name" value="Glutamate_5-kinase_CS"/>
</dbReference>
<dbReference type="NCBIfam" id="TIGR01027">
    <property type="entry name" value="proB"/>
    <property type="match status" value="1"/>
</dbReference>
<dbReference type="PANTHER" id="PTHR43654">
    <property type="entry name" value="GLUTAMATE 5-KINASE"/>
    <property type="match status" value="1"/>
</dbReference>
<dbReference type="PANTHER" id="PTHR43654:SF1">
    <property type="entry name" value="ISOPENTENYL PHOSPHATE KINASE"/>
    <property type="match status" value="1"/>
</dbReference>
<dbReference type="Pfam" id="PF00696">
    <property type="entry name" value="AA_kinase"/>
    <property type="match status" value="1"/>
</dbReference>
<dbReference type="PIRSF" id="PIRSF000729">
    <property type="entry name" value="GK"/>
    <property type="match status" value="1"/>
</dbReference>
<dbReference type="PRINTS" id="PR00474">
    <property type="entry name" value="GLU5KINASE"/>
</dbReference>
<dbReference type="SUPFAM" id="SSF53633">
    <property type="entry name" value="Carbamate kinase-like"/>
    <property type="match status" value="1"/>
</dbReference>
<dbReference type="PROSITE" id="PS00902">
    <property type="entry name" value="GLUTAMATE_5_KINASE"/>
    <property type="match status" value="1"/>
</dbReference>
<comment type="function">
    <text evidence="1">Catalyzes the transfer of a phosphate group to glutamate to form L-glutamate 5-phosphate.</text>
</comment>
<comment type="catalytic activity">
    <reaction evidence="1">
        <text>L-glutamate + ATP = L-glutamyl 5-phosphate + ADP</text>
        <dbReference type="Rhea" id="RHEA:14877"/>
        <dbReference type="ChEBI" id="CHEBI:29985"/>
        <dbReference type="ChEBI" id="CHEBI:30616"/>
        <dbReference type="ChEBI" id="CHEBI:58274"/>
        <dbReference type="ChEBI" id="CHEBI:456216"/>
        <dbReference type="EC" id="2.7.2.11"/>
    </reaction>
</comment>
<comment type="pathway">
    <text evidence="1">Amino-acid biosynthesis; L-proline biosynthesis; L-glutamate 5-semialdehyde from L-glutamate: step 1/2.</text>
</comment>
<comment type="subcellular location">
    <subcellularLocation>
        <location evidence="1">Cytoplasm</location>
    </subcellularLocation>
</comment>
<comment type="similarity">
    <text evidence="1">Belongs to the glutamate 5-kinase family.</text>
</comment>
<comment type="sequence caution" evidence="2">
    <conflict type="erroneous initiation">
        <sequence resource="EMBL-CDS" id="ABF34554"/>
    </conflict>
</comment>
<reference key="1">
    <citation type="journal article" date="2006" name="Proc. Natl. Acad. Sci. U.S.A.">
        <title>Molecular genetic anatomy of inter- and intraserotype variation in the human bacterial pathogen group A Streptococcus.</title>
        <authorList>
            <person name="Beres S.B."/>
            <person name="Richter E.W."/>
            <person name="Nagiec M.J."/>
            <person name="Sumby P."/>
            <person name="Porcella S.F."/>
            <person name="DeLeo F.R."/>
            <person name="Musser J.M."/>
        </authorList>
    </citation>
    <scope>NUCLEOTIDE SEQUENCE [LARGE SCALE GENOMIC DNA]</scope>
    <source>
        <strain>MGAS10270</strain>
    </source>
</reference>
<proteinExistence type="inferred from homology"/>
<keyword id="KW-0028">Amino-acid biosynthesis</keyword>
<keyword id="KW-0067">ATP-binding</keyword>
<keyword id="KW-0963">Cytoplasm</keyword>
<keyword id="KW-0418">Kinase</keyword>
<keyword id="KW-0547">Nucleotide-binding</keyword>
<keyword id="KW-0641">Proline biosynthesis</keyword>
<keyword id="KW-0808">Transferase</keyword>
<gene>
    <name evidence="1" type="primary">proB</name>
    <name type="ordered locus">MGAS10270_Spy1489</name>
</gene>